<keyword id="KW-0903">Direct protein sequencing</keyword>
<keyword id="KW-0378">Hydrolase</keyword>
<keyword id="KW-0479">Metal-binding</keyword>
<keyword id="KW-1185">Reference proteome</keyword>
<keyword id="KW-0862">Zinc</keyword>
<name>GUAD_DICDI</name>
<reference key="1">
    <citation type="journal article" date="2002" name="Nature">
        <title>Sequence and analysis of chromosome 2 of Dictyostelium discoideum.</title>
        <authorList>
            <person name="Gloeckner G."/>
            <person name="Eichinger L."/>
            <person name="Szafranski K."/>
            <person name="Pachebat J.A."/>
            <person name="Bankier A.T."/>
            <person name="Dear P.H."/>
            <person name="Lehmann R."/>
            <person name="Baumgart C."/>
            <person name="Parra G."/>
            <person name="Abril J.F."/>
            <person name="Guigo R."/>
            <person name="Kumpf K."/>
            <person name="Tunggal B."/>
            <person name="Cox E.C."/>
            <person name="Quail M.A."/>
            <person name="Platzer M."/>
            <person name="Rosenthal A."/>
            <person name="Noegel A.A."/>
        </authorList>
    </citation>
    <scope>NUCLEOTIDE SEQUENCE [LARGE SCALE GENOMIC DNA]</scope>
    <source>
        <strain>AX4</strain>
    </source>
</reference>
<reference key="2">
    <citation type="journal article" date="2005" name="Nature">
        <title>The genome of the social amoeba Dictyostelium discoideum.</title>
        <authorList>
            <person name="Eichinger L."/>
            <person name="Pachebat J.A."/>
            <person name="Gloeckner G."/>
            <person name="Rajandream M.A."/>
            <person name="Sucgang R."/>
            <person name="Berriman M."/>
            <person name="Song J."/>
            <person name="Olsen R."/>
            <person name="Szafranski K."/>
            <person name="Xu Q."/>
            <person name="Tunggal B."/>
            <person name="Kummerfeld S."/>
            <person name="Madera M."/>
            <person name="Konfortov B.A."/>
            <person name="Rivero F."/>
            <person name="Bankier A.T."/>
            <person name="Lehmann R."/>
            <person name="Hamlin N."/>
            <person name="Davies R."/>
            <person name="Gaudet P."/>
            <person name="Fey P."/>
            <person name="Pilcher K."/>
            <person name="Chen G."/>
            <person name="Saunders D."/>
            <person name="Sodergren E.J."/>
            <person name="Davis P."/>
            <person name="Kerhornou A."/>
            <person name="Nie X."/>
            <person name="Hall N."/>
            <person name="Anjard C."/>
            <person name="Hemphill L."/>
            <person name="Bason N."/>
            <person name="Farbrother P."/>
            <person name="Desany B."/>
            <person name="Just E."/>
            <person name="Morio T."/>
            <person name="Rost R."/>
            <person name="Churcher C.M."/>
            <person name="Cooper J."/>
            <person name="Haydock S."/>
            <person name="van Driessche N."/>
            <person name="Cronin A."/>
            <person name="Goodhead I."/>
            <person name="Muzny D.M."/>
            <person name="Mourier T."/>
            <person name="Pain A."/>
            <person name="Lu M."/>
            <person name="Harper D."/>
            <person name="Lindsay R."/>
            <person name="Hauser H."/>
            <person name="James K.D."/>
            <person name="Quiles M."/>
            <person name="Madan Babu M."/>
            <person name="Saito T."/>
            <person name="Buchrieser C."/>
            <person name="Wardroper A."/>
            <person name="Felder M."/>
            <person name="Thangavelu M."/>
            <person name="Johnson D."/>
            <person name="Knights A."/>
            <person name="Loulseged H."/>
            <person name="Mungall K.L."/>
            <person name="Oliver K."/>
            <person name="Price C."/>
            <person name="Quail M.A."/>
            <person name="Urushihara H."/>
            <person name="Hernandez J."/>
            <person name="Rabbinowitsch E."/>
            <person name="Steffen D."/>
            <person name="Sanders M."/>
            <person name="Ma J."/>
            <person name="Kohara Y."/>
            <person name="Sharp S."/>
            <person name="Simmonds M.N."/>
            <person name="Spiegler S."/>
            <person name="Tivey A."/>
            <person name="Sugano S."/>
            <person name="White B."/>
            <person name="Walker D."/>
            <person name="Woodward J.R."/>
            <person name="Winckler T."/>
            <person name="Tanaka Y."/>
            <person name="Shaulsky G."/>
            <person name="Schleicher M."/>
            <person name="Weinstock G.M."/>
            <person name="Rosenthal A."/>
            <person name="Cox E.C."/>
            <person name="Chisholm R.L."/>
            <person name="Gibbs R.A."/>
            <person name="Loomis W.F."/>
            <person name="Platzer M."/>
            <person name="Kay R.R."/>
            <person name="Williams J.G."/>
            <person name="Dear P.H."/>
            <person name="Noegel A.A."/>
            <person name="Barrell B.G."/>
            <person name="Kuspa A."/>
        </authorList>
    </citation>
    <scope>NUCLEOTIDE SEQUENCE [LARGE SCALE GENOMIC DNA]</scope>
    <source>
        <strain>AX4</strain>
    </source>
</reference>
<reference key="3">
    <citation type="submission" date="2010-01" db="UniProtKB">
        <authorList>
            <person name="Bienvenut W.V."/>
            <person name="Veltman D.M."/>
            <person name="Insall R.H."/>
        </authorList>
    </citation>
    <scope>PROTEIN SEQUENCE OF 207-218 AND 391-398</scope>
    <scope>IDENTIFICATION BY MASS SPECTROMETRY</scope>
</reference>
<gene>
    <name type="primary">guaD</name>
    <name type="ORF">DDB_G0277743</name>
</gene>
<evidence type="ECO:0000250" key="1"/>
<evidence type="ECO:0000250" key="2">
    <source>
        <dbReference type="UniProtKB" id="Q9Y2T3"/>
    </source>
</evidence>
<evidence type="ECO:0000305" key="3"/>
<dbReference type="EC" id="3.5.4.3"/>
<dbReference type="EMBL" id="AAFI02000022">
    <property type="protein sequence ID" value="EAL68545.1"/>
    <property type="molecule type" value="Genomic_DNA"/>
</dbReference>
<dbReference type="RefSeq" id="XP_642478.1">
    <property type="nucleotide sequence ID" value="XM_637386.1"/>
</dbReference>
<dbReference type="SMR" id="Q86AW9"/>
<dbReference type="FunCoup" id="Q86AW9">
    <property type="interactions" value="74"/>
</dbReference>
<dbReference type="STRING" id="44689.Q86AW9"/>
<dbReference type="MEROPS" id="M38.981"/>
<dbReference type="PaxDb" id="44689-DDB0230211"/>
<dbReference type="EnsemblProtists" id="EAL68545">
    <property type="protein sequence ID" value="EAL68545"/>
    <property type="gene ID" value="DDB_G0277743"/>
</dbReference>
<dbReference type="GeneID" id="8621189"/>
<dbReference type="KEGG" id="ddi:DDB_G0277743"/>
<dbReference type="dictyBase" id="DDB_G0277743">
    <property type="gene designation" value="guaD"/>
</dbReference>
<dbReference type="VEuPathDB" id="AmoebaDB:DDB_G0277743"/>
<dbReference type="eggNOG" id="KOG3968">
    <property type="taxonomic scope" value="Eukaryota"/>
</dbReference>
<dbReference type="HOGENOM" id="CLU_012358_0_1_1"/>
<dbReference type="InParanoid" id="Q86AW9"/>
<dbReference type="OMA" id="CVHMNDS"/>
<dbReference type="PhylomeDB" id="Q86AW9"/>
<dbReference type="Reactome" id="R-DDI-74259">
    <property type="pathway name" value="Purine catabolism"/>
</dbReference>
<dbReference type="UniPathway" id="UPA00603">
    <property type="reaction ID" value="UER00660"/>
</dbReference>
<dbReference type="PRO" id="PR:Q86AW9"/>
<dbReference type="Proteomes" id="UP000002195">
    <property type="component" value="Chromosome 2"/>
</dbReference>
<dbReference type="GO" id="GO:0005829">
    <property type="term" value="C:cytosol"/>
    <property type="evidence" value="ECO:0000318"/>
    <property type="project" value="GO_Central"/>
</dbReference>
<dbReference type="GO" id="GO:0008892">
    <property type="term" value="F:guanine deaminase activity"/>
    <property type="evidence" value="ECO:0000318"/>
    <property type="project" value="GO_Central"/>
</dbReference>
<dbReference type="GO" id="GO:0008270">
    <property type="term" value="F:zinc ion binding"/>
    <property type="evidence" value="ECO:0000318"/>
    <property type="project" value="GO_Central"/>
</dbReference>
<dbReference type="GO" id="GO:0006147">
    <property type="term" value="P:guanine catabolic process"/>
    <property type="evidence" value="ECO:0007669"/>
    <property type="project" value="UniProtKB-UniPathway"/>
</dbReference>
<dbReference type="GO" id="GO:0046098">
    <property type="term" value="P:guanine metabolic process"/>
    <property type="evidence" value="ECO:0000318"/>
    <property type="project" value="GO_Central"/>
</dbReference>
<dbReference type="CDD" id="cd01303">
    <property type="entry name" value="GDEase"/>
    <property type="match status" value="1"/>
</dbReference>
<dbReference type="FunFam" id="3.20.20.140:FF:000022">
    <property type="entry name" value="Guanine deaminase"/>
    <property type="match status" value="1"/>
</dbReference>
<dbReference type="Gene3D" id="3.20.20.140">
    <property type="entry name" value="Metal-dependent hydrolases"/>
    <property type="match status" value="1"/>
</dbReference>
<dbReference type="Gene3D" id="2.30.40.10">
    <property type="entry name" value="Urease, subunit C, domain 1"/>
    <property type="match status" value="1"/>
</dbReference>
<dbReference type="InterPro" id="IPR006680">
    <property type="entry name" value="Amidohydro-rel"/>
</dbReference>
<dbReference type="InterPro" id="IPR014311">
    <property type="entry name" value="Guanine_deaminase"/>
</dbReference>
<dbReference type="InterPro" id="IPR011059">
    <property type="entry name" value="Metal-dep_hydrolase_composite"/>
</dbReference>
<dbReference type="InterPro" id="IPR032466">
    <property type="entry name" value="Metal_Hydrolase"/>
</dbReference>
<dbReference type="InterPro" id="IPR051607">
    <property type="entry name" value="Metallo-dep_hydrolases"/>
</dbReference>
<dbReference type="NCBIfam" id="TIGR02967">
    <property type="entry name" value="guan_deamin"/>
    <property type="match status" value="1"/>
</dbReference>
<dbReference type="PANTHER" id="PTHR11271">
    <property type="entry name" value="GUANINE DEAMINASE"/>
    <property type="match status" value="1"/>
</dbReference>
<dbReference type="PANTHER" id="PTHR11271:SF6">
    <property type="entry name" value="GUANINE DEAMINASE"/>
    <property type="match status" value="1"/>
</dbReference>
<dbReference type="Pfam" id="PF01979">
    <property type="entry name" value="Amidohydro_1"/>
    <property type="match status" value="1"/>
</dbReference>
<dbReference type="SUPFAM" id="SSF51556">
    <property type="entry name" value="Metallo-dependent hydrolases"/>
    <property type="match status" value="1"/>
</dbReference>
<organism>
    <name type="scientific">Dictyostelium discoideum</name>
    <name type="common">Social amoeba</name>
    <dbReference type="NCBI Taxonomy" id="44689"/>
    <lineage>
        <taxon>Eukaryota</taxon>
        <taxon>Amoebozoa</taxon>
        <taxon>Evosea</taxon>
        <taxon>Eumycetozoa</taxon>
        <taxon>Dictyostelia</taxon>
        <taxon>Dictyosteliales</taxon>
        <taxon>Dictyosteliaceae</taxon>
        <taxon>Dictyostelium</taxon>
    </lineage>
</organism>
<accession>Q86AW9</accession>
<accession>Q54Z75</accession>
<proteinExistence type="evidence at protein level"/>
<sequence length="450" mass="50730">MMKANKIIKLFKGTVIHSIEIGKVEILPNSLIGIDEDGVIQHMKSNYEDLKQLEKDVTMICTDNGINEQESVIDMGNKFLIPGFIDTHAHAPQYHNAGTGTDLPLLKWLEKYTFPVESKFKDLIFAENVYGKVVDRMLRHGTTTCCYYATIHLEASELLAEIVSKRGQRAFIGKVCMDRHSPDHYVETTEQSISNTKEFVDRILAKGNPLVQPIVTPRFAPSCTDELMVALGNLSHEKQTLIQSHLSENKDEIEWVKSLYPGIESYTHVYKHFNLLNERTIMAHCVHLSDEEIKLISTQQTAISHCPISNFTLSSGNLDVRKVLEANIKLGLGSDISGGYHPSILQVIRDSIKCSNSHFFNNGNHTPLTFEEAFYLATVGGSKVVNLDHRIGNFIVGKDFDAQIIDPFVQNSPFDCFDGETLKDIFQKFIYLGDDRNLSSLYIKGNKIKF</sequence>
<feature type="chain" id="PRO_0000327713" description="Guanine deaminase">
    <location>
        <begin position="1"/>
        <end position="450"/>
    </location>
</feature>
<feature type="binding site" evidence="2">
    <location>
        <position position="88"/>
    </location>
    <ligand>
        <name>Zn(2+)</name>
        <dbReference type="ChEBI" id="CHEBI:29105"/>
    </ligand>
</feature>
<feature type="binding site" evidence="2">
    <location>
        <begin position="90"/>
        <end position="93"/>
    </location>
    <ligand>
        <name>substrate</name>
    </ligand>
</feature>
<feature type="binding site" evidence="2">
    <location>
        <position position="90"/>
    </location>
    <ligand>
        <name>Zn(2+)</name>
        <dbReference type="ChEBI" id="CHEBI:29105"/>
    </ligand>
</feature>
<feature type="binding site" evidence="2">
    <location>
        <begin position="218"/>
        <end position="219"/>
    </location>
    <ligand>
        <name>substrate</name>
    </ligand>
</feature>
<feature type="binding site" evidence="2">
    <location>
        <begin position="245"/>
        <end position="248"/>
    </location>
    <ligand>
        <name>substrate</name>
    </ligand>
</feature>
<feature type="binding site" evidence="2">
    <location>
        <position position="245"/>
    </location>
    <ligand>
        <name>Zn(2+)</name>
        <dbReference type="ChEBI" id="CHEBI:29105"/>
    </ligand>
</feature>
<feature type="binding site" evidence="2">
    <location>
        <position position="335"/>
    </location>
    <ligand>
        <name>substrate</name>
    </ligand>
</feature>
<feature type="binding site" evidence="2">
    <location>
        <position position="335"/>
    </location>
    <ligand>
        <name>Zn(2+)</name>
        <dbReference type="ChEBI" id="CHEBI:29105"/>
    </ligand>
</feature>
<protein>
    <recommendedName>
        <fullName>Guanine deaminase</fullName>
        <shortName>Guanase</shortName>
        <shortName>Guanine aminase</shortName>
        <ecNumber>3.5.4.3</ecNumber>
    </recommendedName>
    <alternativeName>
        <fullName>Guanine aminohydrolase</fullName>
        <shortName>GAH</shortName>
    </alternativeName>
</protein>
<comment type="function">
    <text evidence="1">Catalyzes the hydrolytic deamination of guanine, producing xanthine and ammonia.</text>
</comment>
<comment type="catalytic activity">
    <reaction>
        <text>guanine + H2O + H(+) = xanthine + NH4(+)</text>
        <dbReference type="Rhea" id="RHEA:14665"/>
        <dbReference type="ChEBI" id="CHEBI:15377"/>
        <dbReference type="ChEBI" id="CHEBI:15378"/>
        <dbReference type="ChEBI" id="CHEBI:16235"/>
        <dbReference type="ChEBI" id="CHEBI:17712"/>
        <dbReference type="ChEBI" id="CHEBI:28938"/>
        <dbReference type="EC" id="3.5.4.3"/>
    </reaction>
</comment>
<comment type="cofactor">
    <cofactor evidence="1">
        <name>Zn(2+)</name>
        <dbReference type="ChEBI" id="CHEBI:29105"/>
    </cofactor>
    <text evidence="1">Binds 1 zinc ion per subunit.</text>
</comment>
<comment type="pathway">
    <text>Purine metabolism; guanine degradation; xanthine from guanine: step 1/1.</text>
</comment>
<comment type="similarity">
    <text evidence="3">Belongs to the metallo-dependent hydrolases superfamily. ATZ/TRZ family.</text>
</comment>